<comment type="subcellular location">
    <subcellularLocation>
        <location evidence="1">Membrane</location>
        <topology evidence="4">Multi-pass membrane protein</topology>
    </subcellularLocation>
</comment>
<comment type="alternative products">
    <event type="alternative splicing"/>
    <isoform>
        <id>Q500Z4-1</id>
        <name>1</name>
        <sequence type="displayed"/>
    </isoform>
    <isoform>
        <id>Q500Z4-2</id>
        <name>2</name>
        <sequence type="described" ref="VSP_045502"/>
    </isoform>
</comment>
<comment type="similarity">
    <text evidence="4">Belongs to the drug/metabolite transporter (DMT) superfamily. Plant drug/metabolite exporter (P-DME) (TC 2.A.7.4) family.</text>
</comment>
<comment type="sequence caution" evidence="4">
    <conflict type="erroneous gene model prediction">
        <sequence resource="EMBL-CDS" id="AAF16630"/>
    </conflict>
</comment>
<comment type="sequence caution" evidence="4">
    <conflict type="erroneous initiation">
        <sequence resource="EMBL-CDS" id="AAY27060"/>
    </conflict>
    <text>Truncated N-terminus.</text>
</comment>
<comment type="sequence caution" evidence="4">
    <conflict type="erroneous initiation">
        <sequence resource="EMBL-CDS" id="AEE28738"/>
    </conflict>
    <text>Truncated N-terminus.</text>
</comment>
<dbReference type="EMBL" id="AC011661">
    <property type="protein sequence ID" value="AAF16630.1"/>
    <property type="status" value="ALT_SEQ"/>
    <property type="molecule type" value="Genomic_DNA"/>
</dbReference>
<dbReference type="EMBL" id="CP002684">
    <property type="protein sequence ID" value="AEE28737.1"/>
    <property type="molecule type" value="Genomic_DNA"/>
</dbReference>
<dbReference type="EMBL" id="CP002684">
    <property type="protein sequence ID" value="AEE28738.1"/>
    <property type="status" value="ALT_INIT"/>
    <property type="molecule type" value="Genomic_DNA"/>
</dbReference>
<dbReference type="EMBL" id="CP002684">
    <property type="protein sequence ID" value="ANM57690.1"/>
    <property type="molecule type" value="Genomic_DNA"/>
</dbReference>
<dbReference type="EMBL" id="AK227720">
    <property type="protein sequence ID" value="BAE99706.1"/>
    <property type="molecule type" value="mRNA"/>
</dbReference>
<dbReference type="EMBL" id="BT022073">
    <property type="protein sequence ID" value="AAY27060.1"/>
    <property type="status" value="ALT_INIT"/>
    <property type="molecule type" value="mRNA"/>
</dbReference>
<dbReference type="EMBL" id="BT023478">
    <property type="protein sequence ID" value="AAY57317.1"/>
    <property type="molecule type" value="mRNA"/>
</dbReference>
<dbReference type="RefSeq" id="NP_001077514.1">
    <property type="nucleotide sequence ID" value="NM_001084045.1"/>
</dbReference>
<dbReference type="RefSeq" id="NP_001320179.1">
    <molecule id="Q500Z4-1"/>
    <property type="nucleotide sequence ID" value="NM_001331987.1"/>
</dbReference>
<dbReference type="RefSeq" id="NP_172612.2">
    <molecule id="Q500Z4-2"/>
    <property type="nucleotide sequence ID" value="NM_101018.3"/>
</dbReference>
<dbReference type="SMR" id="Q500Z4"/>
<dbReference type="BioGRID" id="22927">
    <property type="interactions" value="53"/>
</dbReference>
<dbReference type="IntAct" id="Q500Z4">
    <property type="interactions" value="53"/>
</dbReference>
<dbReference type="PaxDb" id="3702-AT1G11450.2"/>
<dbReference type="EnsemblPlants" id="AT1G11450.1">
    <molecule id="Q500Z4-2"/>
    <property type="protein sequence ID" value="AT1G11450.1"/>
    <property type="gene ID" value="AT1G11450"/>
</dbReference>
<dbReference type="EnsemblPlants" id="AT1G11450.3">
    <molecule id="Q500Z4-1"/>
    <property type="protein sequence ID" value="AT1G11450.3"/>
    <property type="gene ID" value="AT1G11450"/>
</dbReference>
<dbReference type="GeneID" id="837687"/>
<dbReference type="Gramene" id="AT1G11450.1">
    <molecule id="Q500Z4-2"/>
    <property type="protein sequence ID" value="AT1G11450.1"/>
    <property type="gene ID" value="AT1G11450"/>
</dbReference>
<dbReference type="Gramene" id="AT1G11450.3">
    <molecule id="Q500Z4-1"/>
    <property type="protein sequence ID" value="AT1G11450.3"/>
    <property type="gene ID" value="AT1G11450"/>
</dbReference>
<dbReference type="KEGG" id="ath:AT1G11450"/>
<dbReference type="Araport" id="AT1G11450"/>
<dbReference type="TAIR" id="AT1G11450">
    <property type="gene designation" value="UMAMIT27"/>
</dbReference>
<dbReference type="eggNOG" id="ENOG502QWIP">
    <property type="taxonomic scope" value="Eukaryota"/>
</dbReference>
<dbReference type="InParanoid" id="Q500Z4"/>
<dbReference type="PRO" id="PR:Q500Z4"/>
<dbReference type="Proteomes" id="UP000006548">
    <property type="component" value="Chromosome 1"/>
</dbReference>
<dbReference type="ExpressionAtlas" id="Q500Z4">
    <property type="expression patterns" value="baseline and differential"/>
</dbReference>
<dbReference type="GO" id="GO:0016020">
    <property type="term" value="C:membrane"/>
    <property type="evidence" value="ECO:0007669"/>
    <property type="project" value="UniProtKB-SubCell"/>
</dbReference>
<dbReference type="GO" id="GO:0022857">
    <property type="term" value="F:transmembrane transporter activity"/>
    <property type="evidence" value="ECO:0007669"/>
    <property type="project" value="InterPro"/>
</dbReference>
<dbReference type="InterPro" id="IPR000620">
    <property type="entry name" value="EamA_dom"/>
</dbReference>
<dbReference type="InterPro" id="IPR030184">
    <property type="entry name" value="WAT1-related"/>
</dbReference>
<dbReference type="PANTHER" id="PTHR31218">
    <property type="entry name" value="WAT1-RELATED PROTEIN"/>
    <property type="match status" value="1"/>
</dbReference>
<dbReference type="Pfam" id="PF00892">
    <property type="entry name" value="EamA"/>
    <property type="match status" value="2"/>
</dbReference>
<dbReference type="SUPFAM" id="SSF103481">
    <property type="entry name" value="Multidrug resistance efflux transporter EmrE"/>
    <property type="match status" value="2"/>
</dbReference>
<feature type="chain" id="PRO_0000421311" description="WAT1-related protein At1g11450">
    <location>
        <begin position="1"/>
        <end position="352"/>
    </location>
</feature>
<feature type="transmembrane region" description="Helical" evidence="2">
    <location>
        <begin position="14"/>
        <end position="34"/>
    </location>
</feature>
<feature type="transmembrane region" description="Helical" evidence="2">
    <location>
        <begin position="46"/>
        <end position="66"/>
    </location>
</feature>
<feature type="transmembrane region" description="Helical" evidence="2">
    <location>
        <begin position="83"/>
        <end position="103"/>
    </location>
</feature>
<feature type="transmembrane region" description="Helical" evidence="2">
    <location>
        <begin position="107"/>
        <end position="127"/>
    </location>
</feature>
<feature type="transmembrane region" description="Helical" evidence="2">
    <location>
        <begin position="139"/>
        <end position="159"/>
    </location>
</feature>
<feature type="transmembrane region" description="Helical" evidence="2">
    <location>
        <begin position="187"/>
        <end position="207"/>
    </location>
</feature>
<feature type="transmembrane region" description="Helical" evidence="2">
    <location>
        <begin position="219"/>
        <end position="239"/>
    </location>
</feature>
<feature type="transmembrane region" description="Helical" evidence="2">
    <location>
        <begin position="253"/>
        <end position="273"/>
    </location>
</feature>
<feature type="transmembrane region" description="Helical" evidence="2">
    <location>
        <begin position="283"/>
        <end position="303"/>
    </location>
</feature>
<feature type="transmembrane region" description="Helical" evidence="2">
    <location>
        <begin position="308"/>
        <end position="328"/>
    </location>
</feature>
<feature type="domain" description="EamA 1">
    <location>
        <begin position="27"/>
        <end position="157"/>
    </location>
</feature>
<feature type="domain" description="EamA 2">
    <location>
        <begin position="192"/>
        <end position="335"/>
    </location>
</feature>
<feature type="splice variant" id="VSP_045502" description="In isoform 2." evidence="3">
    <location>
        <begin position="1"/>
        <end position="92"/>
    </location>
</feature>
<keyword id="KW-0025">Alternative splicing</keyword>
<keyword id="KW-0472">Membrane</keyword>
<keyword id="KW-1185">Reference proteome</keyword>
<keyword id="KW-0677">Repeat</keyword>
<keyword id="KW-0812">Transmembrane</keyword>
<keyword id="KW-1133">Transmembrane helix</keyword>
<accession>Q500Z4</accession>
<accession>Q0WT42</accession>
<accession>Q9LPY9</accession>
<proteinExistence type="evidence at transcript level"/>
<evidence type="ECO:0000250" key="1"/>
<evidence type="ECO:0000255" key="2"/>
<evidence type="ECO:0000303" key="3">
    <source ref="3"/>
</evidence>
<evidence type="ECO:0000305" key="4"/>
<reference key="1">
    <citation type="journal article" date="2000" name="Nature">
        <title>Sequence and analysis of chromosome 1 of the plant Arabidopsis thaliana.</title>
        <authorList>
            <person name="Theologis A."/>
            <person name="Ecker J.R."/>
            <person name="Palm C.J."/>
            <person name="Federspiel N.A."/>
            <person name="Kaul S."/>
            <person name="White O."/>
            <person name="Alonso J."/>
            <person name="Altafi H."/>
            <person name="Araujo R."/>
            <person name="Bowman C.L."/>
            <person name="Brooks S.Y."/>
            <person name="Buehler E."/>
            <person name="Chan A."/>
            <person name="Chao Q."/>
            <person name="Chen H."/>
            <person name="Cheuk R.F."/>
            <person name="Chin C.W."/>
            <person name="Chung M.K."/>
            <person name="Conn L."/>
            <person name="Conway A.B."/>
            <person name="Conway A.R."/>
            <person name="Creasy T.H."/>
            <person name="Dewar K."/>
            <person name="Dunn P."/>
            <person name="Etgu P."/>
            <person name="Feldblyum T.V."/>
            <person name="Feng J.-D."/>
            <person name="Fong B."/>
            <person name="Fujii C.Y."/>
            <person name="Gill J.E."/>
            <person name="Goldsmith A.D."/>
            <person name="Haas B."/>
            <person name="Hansen N.F."/>
            <person name="Hughes B."/>
            <person name="Huizar L."/>
            <person name="Hunter J.L."/>
            <person name="Jenkins J."/>
            <person name="Johnson-Hopson C."/>
            <person name="Khan S."/>
            <person name="Khaykin E."/>
            <person name="Kim C.J."/>
            <person name="Koo H.L."/>
            <person name="Kremenetskaia I."/>
            <person name="Kurtz D.B."/>
            <person name="Kwan A."/>
            <person name="Lam B."/>
            <person name="Langin-Hooper S."/>
            <person name="Lee A."/>
            <person name="Lee J.M."/>
            <person name="Lenz C.A."/>
            <person name="Li J.H."/>
            <person name="Li Y.-P."/>
            <person name="Lin X."/>
            <person name="Liu S.X."/>
            <person name="Liu Z.A."/>
            <person name="Luros J.S."/>
            <person name="Maiti R."/>
            <person name="Marziali A."/>
            <person name="Militscher J."/>
            <person name="Miranda M."/>
            <person name="Nguyen M."/>
            <person name="Nierman W.C."/>
            <person name="Osborne B.I."/>
            <person name="Pai G."/>
            <person name="Peterson J."/>
            <person name="Pham P.K."/>
            <person name="Rizzo M."/>
            <person name="Rooney T."/>
            <person name="Rowley D."/>
            <person name="Sakano H."/>
            <person name="Salzberg S.L."/>
            <person name="Schwartz J.R."/>
            <person name="Shinn P."/>
            <person name="Southwick A.M."/>
            <person name="Sun H."/>
            <person name="Tallon L.J."/>
            <person name="Tambunga G."/>
            <person name="Toriumi M.J."/>
            <person name="Town C.D."/>
            <person name="Utterback T."/>
            <person name="Van Aken S."/>
            <person name="Vaysberg M."/>
            <person name="Vysotskaia V.S."/>
            <person name="Walker M."/>
            <person name="Wu D."/>
            <person name="Yu G."/>
            <person name="Fraser C.M."/>
            <person name="Venter J.C."/>
            <person name="Davis R.W."/>
        </authorList>
    </citation>
    <scope>NUCLEOTIDE SEQUENCE [LARGE SCALE GENOMIC DNA]</scope>
    <source>
        <strain>cv. Columbia</strain>
    </source>
</reference>
<reference key="2">
    <citation type="journal article" date="2017" name="Plant J.">
        <title>Araport11: a complete reannotation of the Arabidopsis thaliana reference genome.</title>
        <authorList>
            <person name="Cheng C.Y."/>
            <person name="Krishnakumar V."/>
            <person name="Chan A.P."/>
            <person name="Thibaud-Nissen F."/>
            <person name="Schobel S."/>
            <person name="Town C.D."/>
        </authorList>
    </citation>
    <scope>GENOME REANNOTATION</scope>
    <source>
        <strain>cv. Columbia</strain>
    </source>
</reference>
<reference key="3">
    <citation type="submission" date="2006-07" db="EMBL/GenBank/DDBJ databases">
        <title>Large-scale analysis of RIKEN Arabidopsis full-length (RAFL) cDNAs.</title>
        <authorList>
            <person name="Totoki Y."/>
            <person name="Seki M."/>
            <person name="Ishida J."/>
            <person name="Nakajima M."/>
            <person name="Enju A."/>
            <person name="Kamiya A."/>
            <person name="Narusaka M."/>
            <person name="Shin-i T."/>
            <person name="Nakagawa M."/>
            <person name="Sakamoto N."/>
            <person name="Oishi K."/>
            <person name="Kohara Y."/>
            <person name="Kobayashi M."/>
            <person name="Toyoda A."/>
            <person name="Sakaki Y."/>
            <person name="Sakurai T."/>
            <person name="Iida K."/>
            <person name="Akiyama K."/>
            <person name="Satou M."/>
            <person name="Toyoda T."/>
            <person name="Konagaya A."/>
            <person name="Carninci P."/>
            <person name="Kawai J."/>
            <person name="Hayashizaki Y."/>
            <person name="Shinozaki K."/>
        </authorList>
    </citation>
    <scope>NUCLEOTIDE SEQUENCE [LARGE SCALE MRNA] (ISOFORM 2)</scope>
    <source>
        <strain>cv. Columbia</strain>
    </source>
</reference>
<reference key="4">
    <citation type="submission" date="2005-05" db="EMBL/GenBank/DDBJ databases">
        <title>Arabidopsis cDNA clones.</title>
        <authorList>
            <person name="Shinn P."/>
            <person name="Chen H."/>
            <person name="Cheuk R.F."/>
            <person name="Kim C.J."/>
            <person name="Ecker J.R."/>
        </authorList>
    </citation>
    <scope>NUCLEOTIDE SEQUENCE [LARGE SCALE MRNA] OF 51-352 (ISOFORM 1)</scope>
    <source>
        <strain>cv. Columbia</strain>
    </source>
</reference>
<sequence length="352" mass="38635">MGEDMRGVKVVSKWPPMIVMVTSQVAMGSVNALVKKALDVGVNHMIIGAYRMAISSFILVPIAYFLERKIIPKITFRLMVDHFISGLLGASLMQFFYLLGLSYTSATVACALVSLMPAITFAFALILRTEKIKDLKTQAGMIKVMGTLICISGALFLTFYKGPHISNSHSHLEALPHNNSDHNTKNWLLGCLYLVIGIVLLSLWILFQGTLSIKYPCKFSSTCLMSIFAAFQCALLSLYKSRDLKHWIIDDGFVIGVIIYAGVIGQAMSTVAATWGINRLGAVFASAIMPVSLISATLFDFLILHTPLYLGSVIGSVGTIIGLYVFLWGKNKETEADITTLSSRMNNEDQRV</sequence>
<name>WTR3_ARATH</name>
<protein>
    <recommendedName>
        <fullName>WAT1-related protein At1g11450</fullName>
    </recommendedName>
</protein>
<organism>
    <name type="scientific">Arabidopsis thaliana</name>
    <name type="common">Mouse-ear cress</name>
    <dbReference type="NCBI Taxonomy" id="3702"/>
    <lineage>
        <taxon>Eukaryota</taxon>
        <taxon>Viridiplantae</taxon>
        <taxon>Streptophyta</taxon>
        <taxon>Embryophyta</taxon>
        <taxon>Tracheophyta</taxon>
        <taxon>Spermatophyta</taxon>
        <taxon>Magnoliopsida</taxon>
        <taxon>eudicotyledons</taxon>
        <taxon>Gunneridae</taxon>
        <taxon>Pentapetalae</taxon>
        <taxon>rosids</taxon>
        <taxon>malvids</taxon>
        <taxon>Brassicales</taxon>
        <taxon>Brassicaceae</taxon>
        <taxon>Camelineae</taxon>
        <taxon>Arabidopsis</taxon>
    </lineage>
</organism>
<gene>
    <name type="ordered locus">At1g11450</name>
    <name type="ORF">T23J18.12</name>
</gene>